<organism>
    <name type="scientific">Vibrio cholerae serotype O1 (strain ATCC 39315 / El Tor Inaba N16961)</name>
    <dbReference type="NCBI Taxonomy" id="243277"/>
    <lineage>
        <taxon>Bacteria</taxon>
        <taxon>Pseudomonadati</taxon>
        <taxon>Pseudomonadota</taxon>
        <taxon>Gammaproteobacteria</taxon>
        <taxon>Vibrionales</taxon>
        <taxon>Vibrionaceae</taxon>
        <taxon>Vibrio</taxon>
    </lineage>
</organism>
<reference key="1">
    <citation type="journal article" date="2000" name="Nature">
        <title>DNA sequence of both chromosomes of the cholera pathogen Vibrio cholerae.</title>
        <authorList>
            <person name="Heidelberg J.F."/>
            <person name="Eisen J.A."/>
            <person name="Nelson W.C."/>
            <person name="Clayton R.A."/>
            <person name="Gwinn M.L."/>
            <person name="Dodson R.J."/>
            <person name="Haft D.H."/>
            <person name="Hickey E.K."/>
            <person name="Peterson J.D."/>
            <person name="Umayam L.A."/>
            <person name="Gill S.R."/>
            <person name="Nelson K.E."/>
            <person name="Read T.D."/>
            <person name="Tettelin H."/>
            <person name="Richardson D.L."/>
            <person name="Ermolaeva M.D."/>
            <person name="Vamathevan J.J."/>
            <person name="Bass S."/>
            <person name="Qin H."/>
            <person name="Dragoi I."/>
            <person name="Sellers P."/>
            <person name="McDonald L.A."/>
            <person name="Utterback T.R."/>
            <person name="Fleischmann R.D."/>
            <person name="Nierman W.C."/>
            <person name="White O."/>
            <person name="Salzberg S.L."/>
            <person name="Smith H.O."/>
            <person name="Colwell R.R."/>
            <person name="Mekalanos J.J."/>
            <person name="Venter J.C."/>
            <person name="Fraser C.M."/>
        </authorList>
    </citation>
    <scope>NUCLEOTIDE SEQUENCE [LARGE SCALE GENOMIC DNA]</scope>
    <source>
        <strain>ATCC 39315 / El Tor Inaba N16961</strain>
    </source>
</reference>
<sequence length="207" mass="23198">MLEVKNLTAIRDERILFESLSFEIHAGELVQIEGRNGTGKTTLLRIIAGLGECECGEILWQRSKIQSDRESYHQDLLFLGHQTGIKRELTALENLRFYLAVHQQTVDDPAIFEALAKVGLAGREDVPVAQLSAGQQRRVALARLWLSKKPLWILDEPLTAIDKQGVSVLEALFLSHAQQGGIVILTTHQDMFADNPKLRKIRLGDPK</sequence>
<protein>
    <recommendedName>
        <fullName evidence="1">Cytochrome c biogenesis ATP-binding export protein CcmA</fullName>
        <ecNumber evidence="1">7.6.2.5</ecNumber>
    </recommendedName>
    <alternativeName>
        <fullName evidence="1">Heme exporter protein A</fullName>
    </alternativeName>
</protein>
<comment type="function">
    <text evidence="1">Part of the ABC transporter complex CcmAB involved in the biogenesis of c-type cytochromes; once thought to export heme, this seems not to be the case, but its exact role is uncertain. Responsible for energy coupling to the transport system.</text>
</comment>
<comment type="catalytic activity">
    <reaction evidence="1">
        <text>heme b(in) + ATP + H2O = heme b(out) + ADP + phosphate + H(+)</text>
        <dbReference type="Rhea" id="RHEA:19261"/>
        <dbReference type="ChEBI" id="CHEBI:15377"/>
        <dbReference type="ChEBI" id="CHEBI:15378"/>
        <dbReference type="ChEBI" id="CHEBI:30616"/>
        <dbReference type="ChEBI" id="CHEBI:43474"/>
        <dbReference type="ChEBI" id="CHEBI:60344"/>
        <dbReference type="ChEBI" id="CHEBI:456216"/>
        <dbReference type="EC" id="7.6.2.5"/>
    </reaction>
</comment>
<comment type="subunit">
    <text evidence="1">The complex is composed of two ATP-binding proteins (CcmA) and two transmembrane proteins (CcmB).</text>
</comment>
<comment type="subcellular location">
    <subcellularLocation>
        <location evidence="1">Cell inner membrane</location>
        <topology evidence="1">Peripheral membrane protein</topology>
    </subcellularLocation>
</comment>
<comment type="similarity">
    <text evidence="1">Belongs to the ABC transporter superfamily. CcmA exporter (TC 3.A.1.107) family.</text>
</comment>
<evidence type="ECO:0000255" key="1">
    <source>
        <dbReference type="HAMAP-Rule" id="MF_01707"/>
    </source>
</evidence>
<accession>Q9KQE3</accession>
<feature type="chain" id="PRO_0000092217" description="Cytochrome c biogenesis ATP-binding export protein CcmA">
    <location>
        <begin position="1"/>
        <end position="207"/>
    </location>
</feature>
<feature type="domain" description="ABC transporter" evidence="1">
    <location>
        <begin position="2"/>
        <end position="204"/>
    </location>
</feature>
<feature type="binding site" evidence="1">
    <location>
        <begin position="34"/>
        <end position="41"/>
    </location>
    <ligand>
        <name>ATP</name>
        <dbReference type="ChEBI" id="CHEBI:30616"/>
    </ligand>
</feature>
<keyword id="KW-0067">ATP-binding</keyword>
<keyword id="KW-0997">Cell inner membrane</keyword>
<keyword id="KW-1003">Cell membrane</keyword>
<keyword id="KW-0201">Cytochrome c-type biogenesis</keyword>
<keyword id="KW-0472">Membrane</keyword>
<keyword id="KW-0547">Nucleotide-binding</keyword>
<keyword id="KW-1185">Reference proteome</keyword>
<keyword id="KW-1278">Translocase</keyword>
<keyword id="KW-0813">Transport</keyword>
<dbReference type="EC" id="7.6.2.5" evidence="1"/>
<dbReference type="EMBL" id="AE003852">
    <property type="protein sequence ID" value="AAF95203.1"/>
    <property type="molecule type" value="Genomic_DNA"/>
</dbReference>
<dbReference type="PIR" id="C82125">
    <property type="entry name" value="C82125"/>
</dbReference>
<dbReference type="RefSeq" id="NP_231689.1">
    <property type="nucleotide sequence ID" value="NC_002505.1"/>
</dbReference>
<dbReference type="RefSeq" id="WP_000895172.1">
    <property type="nucleotide sequence ID" value="NZ_LT906614.1"/>
</dbReference>
<dbReference type="SMR" id="Q9KQE3"/>
<dbReference type="STRING" id="243277.VC_2057"/>
<dbReference type="DNASU" id="2613437"/>
<dbReference type="EnsemblBacteria" id="AAF95203">
    <property type="protein sequence ID" value="AAF95203"/>
    <property type="gene ID" value="VC_2057"/>
</dbReference>
<dbReference type="KEGG" id="vch:VC_2057"/>
<dbReference type="PATRIC" id="fig|243277.26.peg.1966"/>
<dbReference type="eggNOG" id="COG4133">
    <property type="taxonomic scope" value="Bacteria"/>
</dbReference>
<dbReference type="HOGENOM" id="CLU_000604_1_2_6"/>
<dbReference type="Proteomes" id="UP000000584">
    <property type="component" value="Chromosome 1"/>
</dbReference>
<dbReference type="GO" id="GO:0005886">
    <property type="term" value="C:plasma membrane"/>
    <property type="evidence" value="ECO:0007669"/>
    <property type="project" value="UniProtKB-SubCell"/>
</dbReference>
<dbReference type="GO" id="GO:0015439">
    <property type="term" value="F:ABC-type heme transporter activity"/>
    <property type="evidence" value="ECO:0007669"/>
    <property type="project" value="UniProtKB-EC"/>
</dbReference>
<dbReference type="GO" id="GO:0005524">
    <property type="term" value="F:ATP binding"/>
    <property type="evidence" value="ECO:0007669"/>
    <property type="project" value="UniProtKB-KW"/>
</dbReference>
<dbReference type="GO" id="GO:0016887">
    <property type="term" value="F:ATP hydrolysis activity"/>
    <property type="evidence" value="ECO:0007669"/>
    <property type="project" value="InterPro"/>
</dbReference>
<dbReference type="GO" id="GO:0017004">
    <property type="term" value="P:cytochrome complex assembly"/>
    <property type="evidence" value="ECO:0007669"/>
    <property type="project" value="UniProtKB-KW"/>
</dbReference>
<dbReference type="CDD" id="cd03231">
    <property type="entry name" value="ABC_CcmA_heme_exporter"/>
    <property type="match status" value="1"/>
</dbReference>
<dbReference type="FunFam" id="3.40.50.300:FF:001098">
    <property type="entry name" value="Cytochrome c biogenesis ATP-binding export protein CcmA"/>
    <property type="match status" value="1"/>
</dbReference>
<dbReference type="Gene3D" id="3.40.50.300">
    <property type="entry name" value="P-loop containing nucleotide triphosphate hydrolases"/>
    <property type="match status" value="1"/>
</dbReference>
<dbReference type="InterPro" id="IPR003593">
    <property type="entry name" value="AAA+_ATPase"/>
</dbReference>
<dbReference type="InterPro" id="IPR003439">
    <property type="entry name" value="ABC_transporter-like_ATP-bd"/>
</dbReference>
<dbReference type="InterPro" id="IPR017871">
    <property type="entry name" value="ABC_transporter-like_CS"/>
</dbReference>
<dbReference type="InterPro" id="IPR005895">
    <property type="entry name" value="ABC_transptr_haem_export_CcmA"/>
</dbReference>
<dbReference type="InterPro" id="IPR027417">
    <property type="entry name" value="P-loop_NTPase"/>
</dbReference>
<dbReference type="NCBIfam" id="TIGR01189">
    <property type="entry name" value="ccmA"/>
    <property type="match status" value="1"/>
</dbReference>
<dbReference type="NCBIfam" id="NF010061">
    <property type="entry name" value="PRK13538.1"/>
    <property type="match status" value="1"/>
</dbReference>
<dbReference type="PANTHER" id="PTHR43499">
    <property type="entry name" value="ABC TRANSPORTER I FAMILY MEMBER 1"/>
    <property type="match status" value="1"/>
</dbReference>
<dbReference type="PANTHER" id="PTHR43499:SF1">
    <property type="entry name" value="ABC TRANSPORTER I FAMILY MEMBER 1"/>
    <property type="match status" value="1"/>
</dbReference>
<dbReference type="Pfam" id="PF00005">
    <property type="entry name" value="ABC_tran"/>
    <property type="match status" value="1"/>
</dbReference>
<dbReference type="SMART" id="SM00382">
    <property type="entry name" value="AAA"/>
    <property type="match status" value="1"/>
</dbReference>
<dbReference type="SUPFAM" id="SSF52540">
    <property type="entry name" value="P-loop containing nucleoside triphosphate hydrolases"/>
    <property type="match status" value="1"/>
</dbReference>
<dbReference type="PROSITE" id="PS00211">
    <property type="entry name" value="ABC_TRANSPORTER_1"/>
    <property type="match status" value="1"/>
</dbReference>
<dbReference type="PROSITE" id="PS50893">
    <property type="entry name" value="ABC_TRANSPORTER_2"/>
    <property type="match status" value="1"/>
</dbReference>
<dbReference type="PROSITE" id="PS51243">
    <property type="entry name" value="CCMA"/>
    <property type="match status" value="1"/>
</dbReference>
<name>CCMA_VIBCH</name>
<gene>
    <name evidence="1" type="primary">ccmA</name>
    <name type="ordered locus">VC_2057</name>
</gene>
<proteinExistence type="inferred from homology"/>